<proteinExistence type="inferred from homology"/>
<evidence type="ECO:0000255" key="1">
    <source>
        <dbReference type="HAMAP-Rule" id="MF_00017"/>
    </source>
</evidence>
<protein>
    <recommendedName>
        <fullName evidence="1">Recombination protein RecR</fullName>
    </recommendedName>
</protein>
<sequence length="201" mass="21955">MDYPEPIAKLINSYTKLPGIGPKTATRLAFYTLGMQEDDVVDFSKSLLSAKKDLTFCRICGNITENSVNPCAICQDKSRDQSTVFVVENSRDVMAMENTRDYYGLYHVLNGVISPSAGTGPEDINLPSLIRRLSDHQEINEVIVGTNANAEGEATAMYLARLLKPAGIKVTRLAHGLAVGSDIDYADQLTLIKAVQGRTEL</sequence>
<gene>
    <name evidence="1" type="primary">recR</name>
    <name type="ordered locus">LCK_01516</name>
</gene>
<name>RECR_LEUCK</name>
<organism>
    <name type="scientific">Leuconostoc citreum (strain KM20)</name>
    <dbReference type="NCBI Taxonomy" id="349519"/>
    <lineage>
        <taxon>Bacteria</taxon>
        <taxon>Bacillati</taxon>
        <taxon>Bacillota</taxon>
        <taxon>Bacilli</taxon>
        <taxon>Lactobacillales</taxon>
        <taxon>Lactobacillaceae</taxon>
        <taxon>Leuconostoc</taxon>
    </lineage>
</organism>
<dbReference type="EMBL" id="DQ489736">
    <property type="protein sequence ID" value="ACA83340.1"/>
    <property type="molecule type" value="Genomic_DNA"/>
</dbReference>
<dbReference type="RefSeq" id="WP_004906849.1">
    <property type="nucleotide sequence ID" value="NC_010471.1"/>
</dbReference>
<dbReference type="SMR" id="B1MVT6"/>
<dbReference type="STRING" id="349519.LCK_01516"/>
<dbReference type="KEGG" id="lci:LCK_01516"/>
<dbReference type="eggNOG" id="COG0353">
    <property type="taxonomic scope" value="Bacteria"/>
</dbReference>
<dbReference type="HOGENOM" id="CLU_060739_1_0_9"/>
<dbReference type="OrthoDB" id="9802672at2"/>
<dbReference type="Proteomes" id="UP000002166">
    <property type="component" value="Chromosome"/>
</dbReference>
<dbReference type="GO" id="GO:0003677">
    <property type="term" value="F:DNA binding"/>
    <property type="evidence" value="ECO:0007669"/>
    <property type="project" value="UniProtKB-UniRule"/>
</dbReference>
<dbReference type="GO" id="GO:0008270">
    <property type="term" value="F:zinc ion binding"/>
    <property type="evidence" value="ECO:0007669"/>
    <property type="project" value="UniProtKB-KW"/>
</dbReference>
<dbReference type="GO" id="GO:0006310">
    <property type="term" value="P:DNA recombination"/>
    <property type="evidence" value="ECO:0007669"/>
    <property type="project" value="UniProtKB-UniRule"/>
</dbReference>
<dbReference type="GO" id="GO:0006281">
    <property type="term" value="P:DNA repair"/>
    <property type="evidence" value="ECO:0007669"/>
    <property type="project" value="UniProtKB-UniRule"/>
</dbReference>
<dbReference type="CDD" id="cd01025">
    <property type="entry name" value="TOPRIM_recR"/>
    <property type="match status" value="1"/>
</dbReference>
<dbReference type="Gene3D" id="3.40.1360.10">
    <property type="match status" value="1"/>
</dbReference>
<dbReference type="Gene3D" id="6.10.250.240">
    <property type="match status" value="1"/>
</dbReference>
<dbReference type="Gene3D" id="1.10.8.420">
    <property type="entry name" value="RecR Domain 1"/>
    <property type="match status" value="1"/>
</dbReference>
<dbReference type="HAMAP" id="MF_00017">
    <property type="entry name" value="RecR"/>
    <property type="match status" value="1"/>
</dbReference>
<dbReference type="InterPro" id="IPR000093">
    <property type="entry name" value="DNA_Rcmb_RecR"/>
</dbReference>
<dbReference type="InterPro" id="IPR023627">
    <property type="entry name" value="Rcmb_RecR"/>
</dbReference>
<dbReference type="InterPro" id="IPR015967">
    <property type="entry name" value="Rcmb_RecR_Znf"/>
</dbReference>
<dbReference type="InterPro" id="IPR006171">
    <property type="entry name" value="TOPRIM_dom"/>
</dbReference>
<dbReference type="InterPro" id="IPR034137">
    <property type="entry name" value="TOPRIM_RecR"/>
</dbReference>
<dbReference type="NCBIfam" id="TIGR00615">
    <property type="entry name" value="recR"/>
    <property type="match status" value="1"/>
</dbReference>
<dbReference type="PANTHER" id="PTHR30446">
    <property type="entry name" value="RECOMBINATION PROTEIN RECR"/>
    <property type="match status" value="1"/>
</dbReference>
<dbReference type="PANTHER" id="PTHR30446:SF0">
    <property type="entry name" value="RECOMBINATION PROTEIN RECR"/>
    <property type="match status" value="1"/>
</dbReference>
<dbReference type="Pfam" id="PF21175">
    <property type="entry name" value="RecR_C"/>
    <property type="match status" value="1"/>
</dbReference>
<dbReference type="Pfam" id="PF21176">
    <property type="entry name" value="RecR_HhH"/>
    <property type="match status" value="1"/>
</dbReference>
<dbReference type="Pfam" id="PF02132">
    <property type="entry name" value="RecR_ZnF"/>
    <property type="match status" value="1"/>
</dbReference>
<dbReference type="Pfam" id="PF13662">
    <property type="entry name" value="Toprim_4"/>
    <property type="match status" value="1"/>
</dbReference>
<dbReference type="SMART" id="SM00493">
    <property type="entry name" value="TOPRIM"/>
    <property type="match status" value="1"/>
</dbReference>
<dbReference type="SUPFAM" id="SSF111304">
    <property type="entry name" value="Recombination protein RecR"/>
    <property type="match status" value="1"/>
</dbReference>
<dbReference type="PROSITE" id="PS50880">
    <property type="entry name" value="TOPRIM"/>
    <property type="match status" value="1"/>
</dbReference>
<keyword id="KW-0227">DNA damage</keyword>
<keyword id="KW-0233">DNA recombination</keyword>
<keyword id="KW-0234">DNA repair</keyword>
<keyword id="KW-0479">Metal-binding</keyword>
<keyword id="KW-1185">Reference proteome</keyword>
<keyword id="KW-0862">Zinc</keyword>
<keyword id="KW-0863">Zinc-finger</keyword>
<accession>B1MVT6</accession>
<comment type="function">
    <text evidence="1">May play a role in DNA repair. It seems to be involved in an RecBC-independent recombinational process of DNA repair. It may act with RecF and RecO.</text>
</comment>
<comment type="similarity">
    <text evidence="1">Belongs to the RecR family.</text>
</comment>
<feature type="chain" id="PRO_1000089743" description="Recombination protein RecR">
    <location>
        <begin position="1"/>
        <end position="201"/>
    </location>
</feature>
<feature type="domain" description="Toprim" evidence="1">
    <location>
        <begin position="82"/>
        <end position="178"/>
    </location>
</feature>
<feature type="zinc finger region" description="C4-type" evidence="1">
    <location>
        <begin position="57"/>
        <end position="74"/>
    </location>
</feature>
<reference key="1">
    <citation type="journal article" date="2008" name="J. Bacteriol.">
        <title>Complete genome sequence of Leuconostoc citreum KM20.</title>
        <authorList>
            <person name="Kim J.F."/>
            <person name="Jeong H."/>
            <person name="Lee J.-S."/>
            <person name="Choi S.-H."/>
            <person name="Ha M."/>
            <person name="Hur C.-G."/>
            <person name="Kim J.-S."/>
            <person name="Lee S."/>
            <person name="Park H.-S."/>
            <person name="Park Y.-H."/>
            <person name="Oh T.K."/>
        </authorList>
    </citation>
    <scope>NUCLEOTIDE SEQUENCE [LARGE SCALE GENOMIC DNA]</scope>
    <source>
        <strain>KM20</strain>
    </source>
</reference>